<name>GMHA_CAMC1</name>
<reference key="1">
    <citation type="submission" date="2007-10" db="EMBL/GenBank/DDBJ databases">
        <title>Genome sequence of Campylobacter concisus 13826 isolated from human feces.</title>
        <authorList>
            <person name="Fouts D.E."/>
            <person name="Mongodin E.F."/>
            <person name="Puiu D."/>
            <person name="Sebastian Y."/>
            <person name="Miller W.G."/>
            <person name="Mandrell R.E."/>
            <person name="On S."/>
            <person name="Nelson K.E."/>
        </authorList>
    </citation>
    <scope>NUCLEOTIDE SEQUENCE [LARGE SCALE GENOMIC DNA]</scope>
    <source>
        <strain>13826</strain>
    </source>
</reference>
<keyword id="KW-0119">Carbohydrate metabolism</keyword>
<keyword id="KW-0963">Cytoplasm</keyword>
<keyword id="KW-0413">Isomerase</keyword>
<keyword id="KW-0479">Metal-binding</keyword>
<keyword id="KW-0862">Zinc</keyword>
<proteinExistence type="inferred from homology"/>
<comment type="function">
    <text evidence="1">Catalyzes the isomerization of sedoheptulose 7-phosphate in D-glycero-D-manno-heptose 7-phosphate.</text>
</comment>
<comment type="catalytic activity">
    <reaction evidence="1">
        <text>2 D-sedoheptulose 7-phosphate = D-glycero-alpha-D-manno-heptose 7-phosphate + D-glycero-beta-D-manno-heptose 7-phosphate</text>
        <dbReference type="Rhea" id="RHEA:27489"/>
        <dbReference type="ChEBI" id="CHEBI:57483"/>
        <dbReference type="ChEBI" id="CHEBI:60203"/>
        <dbReference type="ChEBI" id="CHEBI:60204"/>
        <dbReference type="EC" id="5.3.1.28"/>
    </reaction>
</comment>
<comment type="cofactor">
    <cofactor evidence="1">
        <name>Zn(2+)</name>
        <dbReference type="ChEBI" id="CHEBI:29105"/>
    </cofactor>
    <text evidence="1">Binds 1 zinc ion per subunit.</text>
</comment>
<comment type="pathway">
    <text evidence="1">Carbohydrate biosynthesis; D-glycero-D-manno-heptose 7-phosphate biosynthesis; D-glycero-alpha-D-manno-heptose 7-phosphate and D-glycero-beta-D-manno-heptose 7-phosphate from sedoheptulose 7-phosphate: step 1/1.</text>
</comment>
<comment type="subunit">
    <text evidence="1">Homotetramer.</text>
</comment>
<comment type="subcellular location">
    <subcellularLocation>
        <location evidence="1">Cytoplasm</location>
    </subcellularLocation>
</comment>
<comment type="miscellaneous">
    <text evidence="1">The reaction produces a racemic mixture of D-glycero-alpha-D-manno-heptose 7-phosphate and D-glycero-beta-D-manno-heptose 7-phosphate.</text>
</comment>
<comment type="similarity">
    <text evidence="1">Belongs to the SIS family. GmhA subfamily.</text>
</comment>
<accession>A7ZE25</accession>
<dbReference type="EC" id="5.3.1.28" evidence="1"/>
<dbReference type="EMBL" id="CP000792">
    <property type="protein sequence ID" value="EAT97383.1"/>
    <property type="molecule type" value="Genomic_DNA"/>
</dbReference>
<dbReference type="RefSeq" id="WP_012139956.1">
    <property type="nucleotide sequence ID" value="NC_009802.2"/>
</dbReference>
<dbReference type="SMR" id="A7ZE25"/>
<dbReference type="STRING" id="360104.CCC13826_0578"/>
<dbReference type="KEGG" id="cco:CCC13826_0578"/>
<dbReference type="eggNOG" id="COG0279">
    <property type="taxonomic scope" value="Bacteria"/>
</dbReference>
<dbReference type="HOGENOM" id="CLU_080999_4_0_7"/>
<dbReference type="OrthoDB" id="9810929at2"/>
<dbReference type="UniPathway" id="UPA00041">
    <property type="reaction ID" value="UER00436"/>
</dbReference>
<dbReference type="Proteomes" id="UP000001121">
    <property type="component" value="Chromosome"/>
</dbReference>
<dbReference type="GO" id="GO:0005737">
    <property type="term" value="C:cytoplasm"/>
    <property type="evidence" value="ECO:0007669"/>
    <property type="project" value="UniProtKB-SubCell"/>
</dbReference>
<dbReference type="GO" id="GO:0097367">
    <property type="term" value="F:carbohydrate derivative binding"/>
    <property type="evidence" value="ECO:0007669"/>
    <property type="project" value="InterPro"/>
</dbReference>
<dbReference type="GO" id="GO:0008968">
    <property type="term" value="F:D-sedoheptulose 7-phosphate isomerase activity"/>
    <property type="evidence" value="ECO:0007669"/>
    <property type="project" value="UniProtKB-UniRule"/>
</dbReference>
<dbReference type="GO" id="GO:0008270">
    <property type="term" value="F:zinc ion binding"/>
    <property type="evidence" value="ECO:0007669"/>
    <property type="project" value="UniProtKB-UniRule"/>
</dbReference>
<dbReference type="GO" id="GO:0005975">
    <property type="term" value="P:carbohydrate metabolic process"/>
    <property type="evidence" value="ECO:0007669"/>
    <property type="project" value="UniProtKB-UniRule"/>
</dbReference>
<dbReference type="GO" id="GO:2001061">
    <property type="term" value="P:D-glycero-D-manno-heptose 7-phosphate biosynthetic process"/>
    <property type="evidence" value="ECO:0007669"/>
    <property type="project" value="UniProtKB-UniPathway"/>
</dbReference>
<dbReference type="CDD" id="cd05006">
    <property type="entry name" value="SIS_GmhA"/>
    <property type="match status" value="1"/>
</dbReference>
<dbReference type="Gene3D" id="3.40.50.10490">
    <property type="entry name" value="Glucose-6-phosphate isomerase like protein, domain 1"/>
    <property type="match status" value="1"/>
</dbReference>
<dbReference type="HAMAP" id="MF_00067">
    <property type="entry name" value="GmhA"/>
    <property type="match status" value="1"/>
</dbReference>
<dbReference type="InterPro" id="IPR035461">
    <property type="entry name" value="GmhA/DiaA"/>
</dbReference>
<dbReference type="InterPro" id="IPR004515">
    <property type="entry name" value="Phosphoheptose_Isoase"/>
</dbReference>
<dbReference type="InterPro" id="IPR001347">
    <property type="entry name" value="SIS_dom"/>
</dbReference>
<dbReference type="InterPro" id="IPR046348">
    <property type="entry name" value="SIS_dom_sf"/>
</dbReference>
<dbReference type="InterPro" id="IPR050099">
    <property type="entry name" value="SIS_GmhA/DiaA_subfam"/>
</dbReference>
<dbReference type="NCBIfam" id="TIGR00441">
    <property type="entry name" value="gmhA"/>
    <property type="match status" value="1"/>
</dbReference>
<dbReference type="PANTHER" id="PTHR30390:SF6">
    <property type="entry name" value="DNAA INITIATOR-ASSOCIATING PROTEIN DIAA"/>
    <property type="match status" value="1"/>
</dbReference>
<dbReference type="PANTHER" id="PTHR30390">
    <property type="entry name" value="SEDOHEPTULOSE 7-PHOSPHATE ISOMERASE / DNAA INITIATOR-ASSOCIATING FACTOR FOR REPLICATION INITIATION"/>
    <property type="match status" value="1"/>
</dbReference>
<dbReference type="Pfam" id="PF13580">
    <property type="entry name" value="SIS_2"/>
    <property type="match status" value="1"/>
</dbReference>
<dbReference type="SUPFAM" id="SSF53697">
    <property type="entry name" value="SIS domain"/>
    <property type="match status" value="1"/>
</dbReference>
<dbReference type="PROSITE" id="PS51464">
    <property type="entry name" value="SIS"/>
    <property type="match status" value="1"/>
</dbReference>
<gene>
    <name evidence="1" type="primary">gmhA</name>
    <name type="ordered locus">Ccon26_11770</name>
    <name type="ORF">CCC13826_0578</name>
</gene>
<feature type="chain" id="PRO_1000196992" description="Phosphoheptose isomerase">
    <location>
        <begin position="1"/>
        <end position="189"/>
    </location>
</feature>
<feature type="domain" description="SIS" evidence="1">
    <location>
        <begin position="34"/>
        <end position="189"/>
    </location>
</feature>
<feature type="binding site" evidence="1">
    <location>
        <begin position="49"/>
        <end position="51"/>
    </location>
    <ligand>
        <name>substrate</name>
    </ligand>
</feature>
<feature type="binding site" evidence="1">
    <location>
        <position position="58"/>
    </location>
    <ligand>
        <name>Zn(2+)</name>
        <dbReference type="ChEBI" id="CHEBI:29105"/>
    </ligand>
</feature>
<feature type="binding site" evidence="1">
    <location>
        <position position="62"/>
    </location>
    <ligand>
        <name>substrate</name>
    </ligand>
</feature>
<feature type="binding site" evidence="1">
    <location>
        <position position="62"/>
    </location>
    <ligand>
        <name>Zn(2+)</name>
        <dbReference type="ChEBI" id="CHEBI:29105"/>
    </ligand>
</feature>
<feature type="binding site" evidence="1">
    <location>
        <begin position="91"/>
        <end position="92"/>
    </location>
    <ligand>
        <name>substrate</name>
    </ligand>
</feature>
<feature type="binding site" evidence="1">
    <location>
        <begin position="117"/>
        <end position="119"/>
    </location>
    <ligand>
        <name>substrate</name>
    </ligand>
</feature>
<feature type="binding site" evidence="1">
    <location>
        <position position="122"/>
    </location>
    <ligand>
        <name>substrate</name>
    </ligand>
</feature>
<feature type="binding site" evidence="1">
    <location>
        <position position="169"/>
    </location>
    <ligand>
        <name>substrate</name>
    </ligand>
</feature>
<feature type="binding site" evidence="1">
    <location>
        <position position="169"/>
    </location>
    <ligand>
        <name>Zn(2+)</name>
        <dbReference type="ChEBI" id="CHEBI:29105"/>
    </ligand>
</feature>
<feature type="binding site" evidence="1">
    <location>
        <position position="177"/>
    </location>
    <ligand>
        <name>Zn(2+)</name>
        <dbReference type="ChEBI" id="CHEBI:29105"/>
    </ligand>
</feature>
<protein>
    <recommendedName>
        <fullName evidence="1">Phosphoheptose isomerase</fullName>
        <ecNumber evidence="1">5.3.1.28</ecNumber>
    </recommendedName>
    <alternativeName>
        <fullName evidence="1">Sedoheptulose 7-phosphate isomerase</fullName>
    </alternativeName>
</protein>
<evidence type="ECO:0000255" key="1">
    <source>
        <dbReference type="HAMAP-Rule" id="MF_00067"/>
    </source>
</evidence>
<sequence length="189" mass="20014">MLKTMIKNELEAHQKTFSEHVNLLGSLELACQMVADTLKNGKKVLICGNGGSAADAQHFAAELTGRYKSERQPLPGIALTTDTSALTAIGNDYGFDYVFSRQFEALAQSGDLLVAISTSGNSKNVLEAIKSAKKMGVSVLGLSGKGGGAMNEGCDLNLVVGSSDTARIQESHIFFIHTICQAVDEAFRG</sequence>
<organism>
    <name type="scientific">Campylobacter concisus (strain 13826)</name>
    <dbReference type="NCBI Taxonomy" id="360104"/>
    <lineage>
        <taxon>Bacteria</taxon>
        <taxon>Pseudomonadati</taxon>
        <taxon>Campylobacterota</taxon>
        <taxon>Epsilonproteobacteria</taxon>
        <taxon>Campylobacterales</taxon>
        <taxon>Campylobacteraceae</taxon>
        <taxon>Campylobacter</taxon>
    </lineage>
</organism>